<comment type="function">
    <text>A leucine-specific metalloprotease that plays a role in controlling the amount of leupeptin during colony development. Degrades leupeptin into three components, acetyl-leucine, leucine and argininal. Has a strict preference for leucine at the P1 site.</text>
</comment>
<comment type="cofactor">
    <cofactor evidence="1">
        <name>Zn(2+)</name>
        <dbReference type="ChEBI" id="CHEBI:29105"/>
    </cofactor>
    <text evidence="1">Binds 2 Zn(2+) ions per subunit.</text>
</comment>
<comment type="activity regulation">
    <text>Activity is inhibited by metalloprotease inhibitors and activated by Mg(2+) and Ca(2+).</text>
</comment>
<comment type="biophysicochemical properties">
    <phDependence>
        <text>Optimum pH is 9.0.</text>
    </phDependence>
    <temperatureDependence>
        <text>Optimum temperature is 40 degrees Celsius.</text>
    </temperatureDependence>
</comment>
<comment type="subunit">
    <text>Monomer.</text>
</comment>
<comment type="subcellular location">
    <subcellularLocation>
        <location evidence="4">Secreted</location>
    </subcellularLocation>
</comment>
<comment type="similarity">
    <text evidence="4">Belongs to the peptidase M28 family. M28A subfamily.</text>
</comment>
<gene>
    <name type="primary">lieA</name>
</gene>
<proteinExistence type="evidence at protein level"/>
<keyword id="KW-0106">Calcium</keyword>
<keyword id="KW-0903">Direct protein sequencing</keyword>
<keyword id="KW-1015">Disulfide bond</keyword>
<keyword id="KW-0378">Hydrolase</keyword>
<keyword id="KW-0479">Metal-binding</keyword>
<keyword id="KW-0482">Metalloprotease</keyword>
<keyword id="KW-0645">Protease</keyword>
<keyword id="KW-0964">Secreted</keyword>
<keyword id="KW-0732">Signal</keyword>
<keyword id="KW-0862">Zinc</keyword>
<dbReference type="EC" id="3.4.24.-"/>
<dbReference type="EMBL" id="AY335438">
    <property type="protein sequence ID" value="AAQ73537.1"/>
    <property type="molecule type" value="Genomic_DNA"/>
</dbReference>
<dbReference type="SMR" id="P81715"/>
<dbReference type="MEROPS" id="M28.003"/>
<dbReference type="OrthoDB" id="2214at2759"/>
<dbReference type="GO" id="GO:0005576">
    <property type="term" value="C:extracellular region"/>
    <property type="evidence" value="ECO:0000304"/>
    <property type="project" value="UniProtKB"/>
</dbReference>
<dbReference type="GO" id="GO:0004177">
    <property type="term" value="F:aminopeptidase activity"/>
    <property type="evidence" value="ECO:0007669"/>
    <property type="project" value="InterPro"/>
</dbReference>
<dbReference type="GO" id="GO:0005509">
    <property type="term" value="F:calcium ion binding"/>
    <property type="evidence" value="ECO:0000304"/>
    <property type="project" value="UniProtKB"/>
</dbReference>
<dbReference type="GO" id="GO:0008235">
    <property type="term" value="F:metalloexopeptidase activity"/>
    <property type="evidence" value="ECO:0007669"/>
    <property type="project" value="InterPro"/>
</dbReference>
<dbReference type="GO" id="GO:0008237">
    <property type="term" value="F:metallopeptidase activity"/>
    <property type="evidence" value="ECO:0000314"/>
    <property type="project" value="UniProtKB"/>
</dbReference>
<dbReference type="GO" id="GO:0004252">
    <property type="term" value="F:serine-type endopeptidase activity"/>
    <property type="evidence" value="ECO:0007669"/>
    <property type="project" value="InterPro"/>
</dbReference>
<dbReference type="GO" id="GO:0008270">
    <property type="term" value="F:zinc ion binding"/>
    <property type="evidence" value="ECO:0000304"/>
    <property type="project" value="UniProtKB"/>
</dbReference>
<dbReference type="GO" id="GO:0006508">
    <property type="term" value="P:proteolysis"/>
    <property type="evidence" value="ECO:0000314"/>
    <property type="project" value="UniProtKB"/>
</dbReference>
<dbReference type="CDD" id="cd03876">
    <property type="entry name" value="M28_SGAP_like"/>
    <property type="match status" value="1"/>
</dbReference>
<dbReference type="FunFam" id="2.60.120.260:FF:000149">
    <property type="entry name" value="Leupeptin-inactivating enzyme 1"/>
    <property type="match status" value="1"/>
</dbReference>
<dbReference type="FunFam" id="3.40.630.10:FF:000066">
    <property type="entry name" value="M28 family peptidase"/>
    <property type="match status" value="1"/>
</dbReference>
<dbReference type="Gene3D" id="2.60.120.260">
    <property type="entry name" value="Galactose-binding domain-like"/>
    <property type="match status" value="1"/>
</dbReference>
<dbReference type="Gene3D" id="3.40.630.10">
    <property type="entry name" value="Zn peptidases"/>
    <property type="match status" value="1"/>
</dbReference>
<dbReference type="InterPro" id="IPR008979">
    <property type="entry name" value="Galactose-bd-like_sf"/>
</dbReference>
<dbReference type="InterPro" id="IPR045175">
    <property type="entry name" value="M28_fam"/>
</dbReference>
<dbReference type="InterPro" id="IPR041756">
    <property type="entry name" value="M28_SGAP-like"/>
</dbReference>
<dbReference type="InterPro" id="IPR002884">
    <property type="entry name" value="P_dom"/>
</dbReference>
<dbReference type="InterPro" id="IPR007484">
    <property type="entry name" value="Peptidase_M28"/>
</dbReference>
<dbReference type="PANTHER" id="PTHR12147">
    <property type="entry name" value="METALLOPEPTIDASE M28 FAMILY MEMBER"/>
    <property type="match status" value="1"/>
</dbReference>
<dbReference type="PANTHER" id="PTHR12147:SF26">
    <property type="entry name" value="PEPTIDASE M28 DOMAIN-CONTAINING PROTEIN"/>
    <property type="match status" value="1"/>
</dbReference>
<dbReference type="Pfam" id="PF01483">
    <property type="entry name" value="P_proprotein"/>
    <property type="match status" value="1"/>
</dbReference>
<dbReference type="Pfam" id="PF04389">
    <property type="entry name" value="Peptidase_M28"/>
    <property type="match status" value="1"/>
</dbReference>
<dbReference type="SUPFAM" id="SSF49785">
    <property type="entry name" value="Galactose-binding domain-like"/>
    <property type="match status" value="1"/>
</dbReference>
<dbReference type="SUPFAM" id="SSF53187">
    <property type="entry name" value="Zn-dependent exopeptidases"/>
    <property type="match status" value="1"/>
</dbReference>
<dbReference type="PROSITE" id="PS51829">
    <property type="entry name" value="P_HOMO_B"/>
    <property type="match status" value="1"/>
</dbReference>
<reference key="1">
    <citation type="submission" date="2003-07" db="EMBL/GenBank/DDBJ databases">
        <title>The role of metalloproteases (leupeptin-inactivating enzymes) in morphological differentiation of Streptomyces exfoliatus SMF13.</title>
        <authorList>
            <person name="Lee D.H."/>
            <person name="Lee K.J."/>
        </authorList>
    </citation>
    <scope>NUCLEOTIDE SEQUENCE [GENOMIC DNA]</scope>
    <source>
        <strain>SMF13</strain>
    </source>
</reference>
<reference evidence="4" key="2">
    <citation type="journal article" date="1998" name="Biochem. J.">
        <title>Characterization of the leupeptin-inactivating enzyme from Streptomyces exfoliatus SMF13 which produces leupeptin.</title>
        <authorList>
            <person name="Kim I.S."/>
            <person name="Kim Y.B."/>
            <person name="Lee K.J."/>
        </authorList>
    </citation>
    <scope>PROTEIN SEQUENCE OF 38-51</scope>
    <source>
        <strain>SMF13</strain>
    </source>
</reference>
<sequence length="438" mass="45302">MSLSVSRRLAAVTAFAVAGLFASAVPAALAAPSAVAAAPTPPDIPLANVKAHLSQLSTIAANNGGNRAHGRAGYKASIDYVKGKLDAAGFTTTLQTFTSSGATGYNLIADWPGGDPNSVLMAGSHLDSVTSGAGINDNGSGSAAVLETALAVSRAGLQPTKHLRFGWWGAEELGLIGSKYYVNNLPAAEKAKISGYLNFDMIGSPNPGYFVYDDDPTIEQTFKNYYAGLGVPTEIETEGDGRSDHAPFKNAGIPVGGLFSGADYTKTAAQAQKWGGTSGQAFDRCYHSSCDSLTNINDTALDRNSDAVAYAIWTLGAGTPVPPGQSFENTADVNVPDSPAAAVSSPITVSGVTGNAPATTKVDVNIVHTYRGDLVVDLVAPDGTVYNLHNRSGGSADNLVQTYTVNASSEVANGVWNLRVKDTAAQDVGYINSWKITF</sequence>
<name>LIE1_STREX</name>
<feature type="signal peptide" evidence="3">
    <location>
        <begin position="1"/>
        <end position="37"/>
    </location>
</feature>
<feature type="chain" id="PRO_0000026852" description="Leupeptin-inactivating enzyme 1">
    <location>
        <begin position="38"/>
        <end position="438"/>
    </location>
</feature>
<feature type="domain" description="P/Homo B" evidence="2">
    <location>
        <begin position="321"/>
        <end position="438"/>
    </location>
</feature>
<feature type="active site" description="Proton acceptor" evidence="1">
    <location>
        <position position="171"/>
    </location>
</feature>
<feature type="binding site" evidence="1">
    <location>
        <position position="125"/>
    </location>
    <ligand>
        <name>Zn(2+)</name>
        <dbReference type="ChEBI" id="CHEBI:29105"/>
        <label>1</label>
        <note>catalytic</note>
    </ligand>
</feature>
<feature type="binding site" evidence="1">
    <location>
        <position position="137"/>
    </location>
    <ligand>
        <name>Zn(2+)</name>
        <dbReference type="ChEBI" id="CHEBI:29105"/>
        <label>1</label>
        <note>catalytic</note>
    </ligand>
</feature>
<feature type="binding site" evidence="1">
    <location>
        <position position="137"/>
    </location>
    <ligand>
        <name>Zn(2+)</name>
        <dbReference type="ChEBI" id="CHEBI:29105"/>
        <label>2</label>
        <note>catalytic</note>
    </ligand>
</feature>
<feature type="binding site" evidence="1">
    <location>
        <position position="172"/>
    </location>
    <ligand>
        <name>Zn(2+)</name>
        <dbReference type="ChEBI" id="CHEBI:29105"/>
        <label>2</label>
        <note>catalytic</note>
    </ligand>
</feature>
<feature type="binding site" evidence="1">
    <location>
        <position position="200"/>
    </location>
    <ligand>
        <name>Zn(2+)</name>
        <dbReference type="ChEBI" id="CHEBI:29105"/>
        <label>1</label>
        <note>catalytic</note>
    </ligand>
</feature>
<feature type="binding site" evidence="1">
    <location>
        <position position="287"/>
    </location>
    <ligand>
        <name>Zn(2+)</name>
        <dbReference type="ChEBI" id="CHEBI:29105"/>
        <label>2</label>
        <note>catalytic</note>
    </ligand>
</feature>
<feature type="site" description="Transition state stabilizer" evidence="1">
    <location>
        <position position="286"/>
    </location>
</feature>
<feature type="disulfide bond" evidence="1">
    <location>
        <begin position="285"/>
        <end position="290"/>
    </location>
</feature>
<feature type="sequence conflict" description="In Ref. 2; AA sequence." evidence="4" ref="2">
    <original>K</original>
    <variation>P</variation>
    <location>
        <position position="50"/>
    </location>
</feature>
<protein>
    <recommendedName>
        <fullName>Leupeptin-inactivating enzyme 1</fullName>
        <shortName>LIE1</shortName>
        <ecNumber>3.4.24.-</ecNumber>
    </recommendedName>
</protein>
<accession>P81715</accession>
<evidence type="ECO:0000250" key="1">
    <source>
        <dbReference type="UniProtKB" id="P80561"/>
    </source>
</evidence>
<evidence type="ECO:0000255" key="2">
    <source>
        <dbReference type="PROSITE-ProRule" id="PRU01173"/>
    </source>
</evidence>
<evidence type="ECO:0000269" key="3">
    <source>
    </source>
</evidence>
<evidence type="ECO:0000305" key="4"/>
<organism evidence="4">
    <name type="scientific">Streptomyces exfoliatus</name>
    <name type="common">Streptomyces hydrogenans</name>
    <dbReference type="NCBI Taxonomy" id="1905"/>
    <lineage>
        <taxon>Bacteria</taxon>
        <taxon>Bacillati</taxon>
        <taxon>Actinomycetota</taxon>
        <taxon>Actinomycetes</taxon>
        <taxon>Kitasatosporales</taxon>
        <taxon>Streptomycetaceae</taxon>
        <taxon>Streptomyces</taxon>
    </lineage>
</organism>